<accession>Q8NY95</accession>
<name>THLA_STAAW</name>
<feature type="chain" id="PRO_0000270508" description="Probable acetyl-CoA acyltransferase">
    <location>
        <begin position="1"/>
        <end position="393"/>
    </location>
</feature>
<feature type="active site" description="Acyl-thioester intermediate" evidence="1">
    <location>
        <position position="88"/>
    </location>
</feature>
<feature type="active site" description="Proton acceptor" evidence="2">
    <location>
        <position position="349"/>
    </location>
</feature>
<feature type="active site" description="Proton acceptor" evidence="2">
    <location>
        <position position="378"/>
    </location>
</feature>
<dbReference type="EC" id="2.3.1.9"/>
<dbReference type="EMBL" id="BA000033">
    <property type="protein sequence ID" value="BAB94195.1"/>
    <property type="molecule type" value="Genomic_DNA"/>
</dbReference>
<dbReference type="RefSeq" id="WP_000199069.1">
    <property type="nucleotide sequence ID" value="NC_003923.1"/>
</dbReference>
<dbReference type="SMR" id="Q8NY95"/>
<dbReference type="KEGG" id="sam:MW0330"/>
<dbReference type="HOGENOM" id="CLU_031026_0_0_9"/>
<dbReference type="GO" id="GO:0005737">
    <property type="term" value="C:cytoplasm"/>
    <property type="evidence" value="ECO:0007669"/>
    <property type="project" value="UniProtKB-SubCell"/>
</dbReference>
<dbReference type="GO" id="GO:0003985">
    <property type="term" value="F:acetyl-CoA C-acetyltransferase activity"/>
    <property type="evidence" value="ECO:0007669"/>
    <property type="project" value="UniProtKB-EC"/>
</dbReference>
<dbReference type="CDD" id="cd00751">
    <property type="entry name" value="thiolase"/>
    <property type="match status" value="1"/>
</dbReference>
<dbReference type="FunFam" id="3.40.47.10:FF:000010">
    <property type="entry name" value="Acetyl-CoA acetyltransferase (Thiolase)"/>
    <property type="match status" value="1"/>
</dbReference>
<dbReference type="Gene3D" id="3.40.47.10">
    <property type="match status" value="2"/>
</dbReference>
<dbReference type="InterPro" id="IPR002155">
    <property type="entry name" value="Thiolase"/>
</dbReference>
<dbReference type="InterPro" id="IPR016039">
    <property type="entry name" value="Thiolase-like"/>
</dbReference>
<dbReference type="InterPro" id="IPR020615">
    <property type="entry name" value="Thiolase_acyl_enz_int_AS"/>
</dbReference>
<dbReference type="InterPro" id="IPR020610">
    <property type="entry name" value="Thiolase_AS"/>
</dbReference>
<dbReference type="InterPro" id="IPR020617">
    <property type="entry name" value="Thiolase_C"/>
</dbReference>
<dbReference type="InterPro" id="IPR020613">
    <property type="entry name" value="Thiolase_CS"/>
</dbReference>
<dbReference type="InterPro" id="IPR020616">
    <property type="entry name" value="Thiolase_N"/>
</dbReference>
<dbReference type="NCBIfam" id="TIGR01930">
    <property type="entry name" value="AcCoA-C-Actrans"/>
    <property type="match status" value="1"/>
</dbReference>
<dbReference type="PANTHER" id="PTHR18919:SF107">
    <property type="entry name" value="ACETYL-COA ACETYLTRANSFERASE, CYTOSOLIC"/>
    <property type="match status" value="1"/>
</dbReference>
<dbReference type="PANTHER" id="PTHR18919">
    <property type="entry name" value="ACETYL-COA C-ACYLTRANSFERASE"/>
    <property type="match status" value="1"/>
</dbReference>
<dbReference type="Pfam" id="PF02803">
    <property type="entry name" value="Thiolase_C"/>
    <property type="match status" value="1"/>
</dbReference>
<dbReference type="Pfam" id="PF00108">
    <property type="entry name" value="Thiolase_N"/>
    <property type="match status" value="1"/>
</dbReference>
<dbReference type="PIRSF" id="PIRSF000429">
    <property type="entry name" value="Ac-CoA_Ac_transf"/>
    <property type="match status" value="1"/>
</dbReference>
<dbReference type="SUPFAM" id="SSF53901">
    <property type="entry name" value="Thiolase-like"/>
    <property type="match status" value="2"/>
</dbReference>
<dbReference type="PROSITE" id="PS00098">
    <property type="entry name" value="THIOLASE_1"/>
    <property type="match status" value="1"/>
</dbReference>
<dbReference type="PROSITE" id="PS00737">
    <property type="entry name" value="THIOLASE_2"/>
    <property type="match status" value="1"/>
</dbReference>
<dbReference type="PROSITE" id="PS00099">
    <property type="entry name" value="THIOLASE_3"/>
    <property type="match status" value="1"/>
</dbReference>
<protein>
    <recommendedName>
        <fullName>Probable acetyl-CoA acyltransferase</fullName>
        <ecNumber>2.3.1.9</ecNumber>
    </recommendedName>
    <alternativeName>
        <fullName>Acetoacetyl-CoA thiolase</fullName>
    </alternativeName>
</protein>
<keyword id="KW-0012">Acyltransferase</keyword>
<keyword id="KW-0963">Cytoplasm</keyword>
<keyword id="KW-0808">Transferase</keyword>
<sequence>MTRVVLAAAYRTPIGVFGGAFKDVPAYDLGATLIEHIIKETGLNPSEIDEVIIGNVLQAGQGQNPARIAAMKGGLPETVPAFTVNKVCGSGLKSIQLAYQSIVTGENDIVLAGGMENMSQSPMLVNNSRFGFKMGHQSMVDSMVYDGLTDVFNQYHMGITAENLVEQYGISREEQDTFAVNSQQKAVRAQQNGEFDSEIVPVSIPQRKGEPILVTKDEGVRENVSVEKLSRLRPAFKKDGTVTAGNASGINDGAAMMLVMSEDKAKELNIEPLAVLDGFGSHGVDPSIMGIAPVGAVEKALKRSKKELSDIDVFELNEAFAAQSLAVDRELKLPPEKVNVKGGAIALGHPIGASGARVLVTLLHQLNDEVETGLTSLCIGGGQAIAAVVSKYK</sequence>
<evidence type="ECO:0000250" key="1"/>
<evidence type="ECO:0000255" key="2">
    <source>
        <dbReference type="PROSITE-ProRule" id="PRU10020"/>
    </source>
</evidence>
<evidence type="ECO:0000305" key="3"/>
<gene>
    <name type="ordered locus">MW0330</name>
</gene>
<organism>
    <name type="scientific">Staphylococcus aureus (strain MW2)</name>
    <dbReference type="NCBI Taxonomy" id="196620"/>
    <lineage>
        <taxon>Bacteria</taxon>
        <taxon>Bacillati</taxon>
        <taxon>Bacillota</taxon>
        <taxon>Bacilli</taxon>
        <taxon>Bacillales</taxon>
        <taxon>Staphylococcaceae</taxon>
        <taxon>Staphylococcus</taxon>
    </lineage>
</organism>
<comment type="catalytic activity">
    <reaction evidence="2">
        <text>2 acetyl-CoA = acetoacetyl-CoA + CoA</text>
        <dbReference type="Rhea" id="RHEA:21036"/>
        <dbReference type="ChEBI" id="CHEBI:57286"/>
        <dbReference type="ChEBI" id="CHEBI:57287"/>
        <dbReference type="ChEBI" id="CHEBI:57288"/>
        <dbReference type="EC" id="2.3.1.9"/>
    </reaction>
</comment>
<comment type="subcellular location">
    <subcellularLocation>
        <location evidence="1">Cytoplasm</location>
    </subcellularLocation>
</comment>
<comment type="similarity">
    <text evidence="3">Belongs to the thiolase-like superfamily. Thiolase family.</text>
</comment>
<reference key="1">
    <citation type="journal article" date="2002" name="Lancet">
        <title>Genome and virulence determinants of high virulence community-acquired MRSA.</title>
        <authorList>
            <person name="Baba T."/>
            <person name="Takeuchi F."/>
            <person name="Kuroda M."/>
            <person name="Yuzawa H."/>
            <person name="Aoki K."/>
            <person name="Oguchi A."/>
            <person name="Nagai Y."/>
            <person name="Iwama N."/>
            <person name="Asano K."/>
            <person name="Naimi T."/>
            <person name="Kuroda H."/>
            <person name="Cui L."/>
            <person name="Yamamoto K."/>
            <person name="Hiramatsu K."/>
        </authorList>
    </citation>
    <scope>NUCLEOTIDE SEQUENCE [LARGE SCALE GENOMIC DNA]</scope>
    <source>
        <strain>MW2</strain>
    </source>
</reference>
<proteinExistence type="inferred from homology"/>